<comment type="function">
    <text evidence="1">Catalyzes the oxidation of 5,10-methylenetetrahydrofolate to 5,10-methenyltetrahydrofolate and then the hydrolysis of 5,10-methenyltetrahydrofolate to 10-formyltetrahydrofolate.</text>
</comment>
<comment type="catalytic activity">
    <reaction evidence="1">
        <text>(6R)-5,10-methylene-5,6,7,8-tetrahydrofolate + NADP(+) = (6R)-5,10-methenyltetrahydrofolate + NADPH</text>
        <dbReference type="Rhea" id="RHEA:22812"/>
        <dbReference type="ChEBI" id="CHEBI:15636"/>
        <dbReference type="ChEBI" id="CHEBI:57455"/>
        <dbReference type="ChEBI" id="CHEBI:57783"/>
        <dbReference type="ChEBI" id="CHEBI:58349"/>
        <dbReference type="EC" id="1.5.1.5"/>
    </reaction>
</comment>
<comment type="catalytic activity">
    <reaction evidence="1">
        <text>(6R)-5,10-methenyltetrahydrofolate + H2O = (6R)-10-formyltetrahydrofolate + H(+)</text>
        <dbReference type="Rhea" id="RHEA:23700"/>
        <dbReference type="ChEBI" id="CHEBI:15377"/>
        <dbReference type="ChEBI" id="CHEBI:15378"/>
        <dbReference type="ChEBI" id="CHEBI:57455"/>
        <dbReference type="ChEBI" id="CHEBI:195366"/>
        <dbReference type="EC" id="3.5.4.9"/>
    </reaction>
</comment>
<comment type="pathway">
    <text evidence="1">One-carbon metabolism; tetrahydrofolate interconversion.</text>
</comment>
<comment type="subunit">
    <text evidence="1">Homodimer.</text>
</comment>
<comment type="similarity">
    <text evidence="1">Belongs to the tetrahydrofolate dehydrogenase/cyclohydrolase family.</text>
</comment>
<accession>B0BXN7</accession>
<name>FOLD_RICRO</name>
<gene>
    <name evidence="1" type="primary">folD</name>
    <name type="ordered locus">RrIowa_0761</name>
</gene>
<proteinExistence type="inferred from homology"/>
<sequence>MNNIIDGKALANEILADLKLEIQELTSQTNASPKLAIVLVGDNPASIIYVRHKIKNAHKVGIYTLLINLSATIHTNDLISKINELNLDNEISGIIVQLPLPSSIDKNKILSAISPSKDIDGFHPLNVGYLHSGISQGFIPCTALGCLAAIKKYEPNLTGKNVVIIGRSNIVGKPLSALLLKENCSVTICHSKTHNLRSITSKADIVVAAIGSPLKLTAEYFNPESIVIDVGINRISSNKIIGDVDFENVQSKVQYITPVPGGIGPMTIAFLLKNTVKAFKDSLYTLDT</sequence>
<organism>
    <name type="scientific">Rickettsia rickettsii (strain Iowa)</name>
    <dbReference type="NCBI Taxonomy" id="452659"/>
    <lineage>
        <taxon>Bacteria</taxon>
        <taxon>Pseudomonadati</taxon>
        <taxon>Pseudomonadota</taxon>
        <taxon>Alphaproteobacteria</taxon>
        <taxon>Rickettsiales</taxon>
        <taxon>Rickettsiaceae</taxon>
        <taxon>Rickettsieae</taxon>
        <taxon>Rickettsia</taxon>
        <taxon>spotted fever group</taxon>
    </lineage>
</organism>
<feature type="chain" id="PRO_1000087913" description="Bifunctional protein FolD">
    <location>
        <begin position="1"/>
        <end position="288"/>
    </location>
</feature>
<feature type="binding site" evidence="1">
    <location>
        <begin position="166"/>
        <end position="168"/>
    </location>
    <ligand>
        <name>NADP(+)</name>
        <dbReference type="ChEBI" id="CHEBI:58349"/>
    </ligand>
</feature>
<feature type="binding site" evidence="1">
    <location>
        <position position="191"/>
    </location>
    <ligand>
        <name>NADP(+)</name>
        <dbReference type="ChEBI" id="CHEBI:58349"/>
    </ligand>
</feature>
<feature type="binding site" evidence="1">
    <location>
        <position position="232"/>
    </location>
    <ligand>
        <name>NADP(+)</name>
        <dbReference type="ChEBI" id="CHEBI:58349"/>
    </ligand>
</feature>
<protein>
    <recommendedName>
        <fullName evidence="1">Bifunctional protein FolD</fullName>
    </recommendedName>
    <domain>
        <recommendedName>
            <fullName evidence="1">Methylenetetrahydrofolate dehydrogenase</fullName>
            <ecNumber evidence="1">1.5.1.5</ecNumber>
        </recommendedName>
    </domain>
    <domain>
        <recommendedName>
            <fullName evidence="1">Methenyltetrahydrofolate cyclohydrolase</fullName>
            <ecNumber evidence="1">3.5.4.9</ecNumber>
        </recommendedName>
    </domain>
</protein>
<evidence type="ECO:0000255" key="1">
    <source>
        <dbReference type="HAMAP-Rule" id="MF_01576"/>
    </source>
</evidence>
<reference key="1">
    <citation type="journal article" date="2008" name="Infect. Immun.">
        <title>Genomic comparison of virulent Rickettsia rickettsii Sheila Smith and avirulent Rickettsia rickettsii Iowa.</title>
        <authorList>
            <person name="Ellison D.W."/>
            <person name="Clark T.R."/>
            <person name="Sturdevant D.E."/>
            <person name="Virtaneva K."/>
            <person name="Porcella S.F."/>
            <person name="Hackstadt T."/>
        </authorList>
    </citation>
    <scope>NUCLEOTIDE SEQUENCE [LARGE SCALE GENOMIC DNA]</scope>
    <source>
        <strain>Iowa</strain>
    </source>
</reference>
<keyword id="KW-0028">Amino-acid biosynthesis</keyword>
<keyword id="KW-0368">Histidine biosynthesis</keyword>
<keyword id="KW-0378">Hydrolase</keyword>
<keyword id="KW-0486">Methionine biosynthesis</keyword>
<keyword id="KW-0511">Multifunctional enzyme</keyword>
<keyword id="KW-0521">NADP</keyword>
<keyword id="KW-0554">One-carbon metabolism</keyword>
<keyword id="KW-0560">Oxidoreductase</keyword>
<keyword id="KW-0658">Purine biosynthesis</keyword>
<dbReference type="EC" id="1.5.1.5" evidence="1"/>
<dbReference type="EC" id="3.5.4.9" evidence="1"/>
<dbReference type="EMBL" id="CP000766">
    <property type="protein sequence ID" value="ABY72613.1"/>
    <property type="molecule type" value="Genomic_DNA"/>
</dbReference>
<dbReference type="RefSeq" id="WP_012150830.1">
    <property type="nucleotide sequence ID" value="NC_010263.3"/>
</dbReference>
<dbReference type="SMR" id="B0BXN7"/>
<dbReference type="GeneID" id="79937379"/>
<dbReference type="KEGG" id="rrj:RrIowa_0761"/>
<dbReference type="eggNOG" id="COG0190">
    <property type="taxonomic scope" value="Bacteria"/>
</dbReference>
<dbReference type="HOGENOM" id="CLU_034045_2_1_5"/>
<dbReference type="UniPathway" id="UPA00193"/>
<dbReference type="Proteomes" id="UP000000796">
    <property type="component" value="Chromosome"/>
</dbReference>
<dbReference type="GO" id="GO:0005829">
    <property type="term" value="C:cytosol"/>
    <property type="evidence" value="ECO:0007669"/>
    <property type="project" value="TreeGrafter"/>
</dbReference>
<dbReference type="GO" id="GO:0004477">
    <property type="term" value="F:methenyltetrahydrofolate cyclohydrolase activity"/>
    <property type="evidence" value="ECO:0007669"/>
    <property type="project" value="UniProtKB-UniRule"/>
</dbReference>
<dbReference type="GO" id="GO:0004488">
    <property type="term" value="F:methylenetetrahydrofolate dehydrogenase (NADP+) activity"/>
    <property type="evidence" value="ECO:0007669"/>
    <property type="project" value="UniProtKB-UniRule"/>
</dbReference>
<dbReference type="GO" id="GO:0000105">
    <property type="term" value="P:L-histidine biosynthetic process"/>
    <property type="evidence" value="ECO:0007669"/>
    <property type="project" value="UniProtKB-KW"/>
</dbReference>
<dbReference type="GO" id="GO:0009086">
    <property type="term" value="P:methionine biosynthetic process"/>
    <property type="evidence" value="ECO:0007669"/>
    <property type="project" value="UniProtKB-KW"/>
</dbReference>
<dbReference type="GO" id="GO:0006164">
    <property type="term" value="P:purine nucleotide biosynthetic process"/>
    <property type="evidence" value="ECO:0007669"/>
    <property type="project" value="UniProtKB-KW"/>
</dbReference>
<dbReference type="GO" id="GO:0035999">
    <property type="term" value="P:tetrahydrofolate interconversion"/>
    <property type="evidence" value="ECO:0007669"/>
    <property type="project" value="UniProtKB-UniRule"/>
</dbReference>
<dbReference type="CDD" id="cd01080">
    <property type="entry name" value="NAD_bind_m-THF_DH_Cyclohyd"/>
    <property type="match status" value="1"/>
</dbReference>
<dbReference type="FunFam" id="3.40.50.720:FF:000094">
    <property type="entry name" value="Bifunctional protein FolD"/>
    <property type="match status" value="1"/>
</dbReference>
<dbReference type="FunFam" id="3.40.50.10860:FF:000005">
    <property type="entry name" value="C-1-tetrahydrofolate synthase, cytoplasmic, putative"/>
    <property type="match status" value="1"/>
</dbReference>
<dbReference type="Gene3D" id="3.40.50.10860">
    <property type="entry name" value="Leucine Dehydrogenase, chain A, domain 1"/>
    <property type="match status" value="1"/>
</dbReference>
<dbReference type="Gene3D" id="3.40.50.720">
    <property type="entry name" value="NAD(P)-binding Rossmann-like Domain"/>
    <property type="match status" value="1"/>
</dbReference>
<dbReference type="HAMAP" id="MF_01576">
    <property type="entry name" value="THF_DHG_CYH"/>
    <property type="match status" value="1"/>
</dbReference>
<dbReference type="InterPro" id="IPR046346">
    <property type="entry name" value="Aminoacid_DH-like_N_sf"/>
</dbReference>
<dbReference type="InterPro" id="IPR036291">
    <property type="entry name" value="NAD(P)-bd_dom_sf"/>
</dbReference>
<dbReference type="InterPro" id="IPR000672">
    <property type="entry name" value="THF_DH/CycHdrlase"/>
</dbReference>
<dbReference type="InterPro" id="IPR020630">
    <property type="entry name" value="THF_DH/CycHdrlase_cat_dom"/>
</dbReference>
<dbReference type="InterPro" id="IPR020867">
    <property type="entry name" value="THF_DH/CycHdrlase_CS"/>
</dbReference>
<dbReference type="InterPro" id="IPR020631">
    <property type="entry name" value="THF_DH/CycHdrlase_NAD-bd_dom"/>
</dbReference>
<dbReference type="NCBIfam" id="NF010768">
    <property type="entry name" value="PRK14171.1"/>
    <property type="match status" value="1"/>
</dbReference>
<dbReference type="PANTHER" id="PTHR48099:SF5">
    <property type="entry name" value="C-1-TETRAHYDROFOLATE SYNTHASE, CYTOPLASMIC"/>
    <property type="match status" value="1"/>
</dbReference>
<dbReference type="PANTHER" id="PTHR48099">
    <property type="entry name" value="C-1-TETRAHYDROFOLATE SYNTHASE, CYTOPLASMIC-RELATED"/>
    <property type="match status" value="1"/>
</dbReference>
<dbReference type="Pfam" id="PF00763">
    <property type="entry name" value="THF_DHG_CYH"/>
    <property type="match status" value="1"/>
</dbReference>
<dbReference type="Pfam" id="PF02882">
    <property type="entry name" value="THF_DHG_CYH_C"/>
    <property type="match status" value="1"/>
</dbReference>
<dbReference type="PRINTS" id="PR00085">
    <property type="entry name" value="THFDHDRGNASE"/>
</dbReference>
<dbReference type="SUPFAM" id="SSF53223">
    <property type="entry name" value="Aminoacid dehydrogenase-like, N-terminal domain"/>
    <property type="match status" value="1"/>
</dbReference>
<dbReference type="SUPFAM" id="SSF51735">
    <property type="entry name" value="NAD(P)-binding Rossmann-fold domains"/>
    <property type="match status" value="1"/>
</dbReference>
<dbReference type="PROSITE" id="PS00766">
    <property type="entry name" value="THF_DHG_CYH_1"/>
    <property type="match status" value="1"/>
</dbReference>
<dbReference type="PROSITE" id="PS00767">
    <property type="entry name" value="THF_DHG_CYH_2"/>
    <property type="match status" value="1"/>
</dbReference>